<dbReference type="EC" id="4.1.1.23" evidence="1"/>
<dbReference type="EMBL" id="AE007869">
    <property type="protein sequence ID" value="AAK86113.2"/>
    <property type="molecule type" value="Genomic_DNA"/>
</dbReference>
<dbReference type="PIR" id="AB2613">
    <property type="entry name" value="AB2613"/>
</dbReference>
<dbReference type="PIR" id="H97394">
    <property type="entry name" value="H97394"/>
</dbReference>
<dbReference type="RefSeq" id="NP_353328.2">
    <property type="nucleotide sequence ID" value="NC_003062.2"/>
</dbReference>
<dbReference type="RefSeq" id="WP_010970804.1">
    <property type="nucleotide sequence ID" value="NC_003062.2"/>
</dbReference>
<dbReference type="SMR" id="P58638"/>
<dbReference type="STRING" id="176299.Atu0298"/>
<dbReference type="EnsemblBacteria" id="AAK86113">
    <property type="protein sequence ID" value="AAK86113"/>
    <property type="gene ID" value="Atu0298"/>
</dbReference>
<dbReference type="GeneID" id="1132336"/>
<dbReference type="KEGG" id="atu:Atu0298"/>
<dbReference type="PATRIC" id="fig|176299.10.peg.289"/>
<dbReference type="eggNOG" id="COG0284">
    <property type="taxonomic scope" value="Bacteria"/>
</dbReference>
<dbReference type="HOGENOM" id="CLU_067069_1_0_5"/>
<dbReference type="OrthoDB" id="9806203at2"/>
<dbReference type="PhylomeDB" id="P58638"/>
<dbReference type="BioCyc" id="AGRO:ATU0298-MONOMER"/>
<dbReference type="UniPathway" id="UPA00070">
    <property type="reaction ID" value="UER00120"/>
</dbReference>
<dbReference type="Proteomes" id="UP000000813">
    <property type="component" value="Chromosome circular"/>
</dbReference>
<dbReference type="GO" id="GO:0005829">
    <property type="term" value="C:cytosol"/>
    <property type="evidence" value="ECO:0007669"/>
    <property type="project" value="TreeGrafter"/>
</dbReference>
<dbReference type="GO" id="GO:0004590">
    <property type="term" value="F:orotidine-5'-phosphate decarboxylase activity"/>
    <property type="evidence" value="ECO:0007669"/>
    <property type="project" value="UniProtKB-UniRule"/>
</dbReference>
<dbReference type="GO" id="GO:0006207">
    <property type="term" value="P:'de novo' pyrimidine nucleobase biosynthetic process"/>
    <property type="evidence" value="ECO:0007669"/>
    <property type="project" value="InterPro"/>
</dbReference>
<dbReference type="GO" id="GO:0044205">
    <property type="term" value="P:'de novo' UMP biosynthetic process"/>
    <property type="evidence" value="ECO:0007669"/>
    <property type="project" value="UniProtKB-UniRule"/>
</dbReference>
<dbReference type="CDD" id="cd04725">
    <property type="entry name" value="OMP_decarboxylase_like"/>
    <property type="match status" value="1"/>
</dbReference>
<dbReference type="Gene3D" id="3.20.20.70">
    <property type="entry name" value="Aldolase class I"/>
    <property type="match status" value="1"/>
</dbReference>
<dbReference type="HAMAP" id="MF_01200_B">
    <property type="entry name" value="OMPdecase_type1_B"/>
    <property type="match status" value="1"/>
</dbReference>
<dbReference type="InterPro" id="IPR013785">
    <property type="entry name" value="Aldolase_TIM"/>
</dbReference>
<dbReference type="InterPro" id="IPR014732">
    <property type="entry name" value="OMPdecase"/>
</dbReference>
<dbReference type="InterPro" id="IPR018089">
    <property type="entry name" value="OMPdecase_AS"/>
</dbReference>
<dbReference type="InterPro" id="IPR047596">
    <property type="entry name" value="OMPdecase_bac"/>
</dbReference>
<dbReference type="InterPro" id="IPR001754">
    <property type="entry name" value="OMPdeCOase_dom"/>
</dbReference>
<dbReference type="InterPro" id="IPR011060">
    <property type="entry name" value="RibuloseP-bd_barrel"/>
</dbReference>
<dbReference type="NCBIfam" id="NF001273">
    <property type="entry name" value="PRK00230.1"/>
    <property type="match status" value="1"/>
</dbReference>
<dbReference type="NCBIfam" id="TIGR01740">
    <property type="entry name" value="pyrF"/>
    <property type="match status" value="1"/>
</dbReference>
<dbReference type="PANTHER" id="PTHR32119">
    <property type="entry name" value="OROTIDINE 5'-PHOSPHATE DECARBOXYLASE"/>
    <property type="match status" value="1"/>
</dbReference>
<dbReference type="PANTHER" id="PTHR32119:SF2">
    <property type="entry name" value="OROTIDINE 5'-PHOSPHATE DECARBOXYLASE"/>
    <property type="match status" value="1"/>
</dbReference>
<dbReference type="Pfam" id="PF00215">
    <property type="entry name" value="OMPdecase"/>
    <property type="match status" value="1"/>
</dbReference>
<dbReference type="SMART" id="SM00934">
    <property type="entry name" value="OMPdecase"/>
    <property type="match status" value="1"/>
</dbReference>
<dbReference type="SUPFAM" id="SSF51366">
    <property type="entry name" value="Ribulose-phoshate binding barrel"/>
    <property type="match status" value="1"/>
</dbReference>
<dbReference type="PROSITE" id="PS00156">
    <property type="entry name" value="OMPDECASE"/>
    <property type="match status" value="1"/>
</dbReference>
<gene>
    <name evidence="1" type="primary">pyrF</name>
    <name type="ordered locus">Atu0298</name>
    <name type="ORF">AGR_C_515</name>
</gene>
<name>PYRF_AGRFC</name>
<feature type="chain" id="PRO_0000134520" description="Orotidine 5'-phosphate decarboxylase">
    <location>
        <begin position="1"/>
        <end position="235"/>
    </location>
</feature>
<feature type="active site" description="Proton donor" evidence="1">
    <location>
        <position position="63"/>
    </location>
</feature>
<feature type="binding site" evidence="1">
    <location>
        <position position="12"/>
    </location>
    <ligand>
        <name>substrate</name>
    </ligand>
</feature>
<feature type="binding site" evidence="1">
    <location>
        <position position="34"/>
    </location>
    <ligand>
        <name>substrate</name>
    </ligand>
</feature>
<feature type="binding site" evidence="1">
    <location>
        <begin position="61"/>
        <end position="70"/>
    </location>
    <ligand>
        <name>substrate</name>
    </ligand>
</feature>
<feature type="binding site" evidence="1">
    <location>
        <position position="116"/>
    </location>
    <ligand>
        <name>substrate</name>
    </ligand>
</feature>
<feature type="binding site" evidence="1">
    <location>
        <position position="177"/>
    </location>
    <ligand>
        <name>substrate</name>
    </ligand>
</feature>
<feature type="binding site" evidence="1">
    <location>
        <position position="186"/>
    </location>
    <ligand>
        <name>substrate</name>
    </ligand>
</feature>
<feature type="binding site" evidence="1">
    <location>
        <position position="207"/>
    </location>
    <ligand>
        <name>substrate</name>
    </ligand>
</feature>
<comment type="function">
    <text evidence="1">Catalyzes the decarboxylation of orotidine 5'-monophosphate (OMP) to uridine 5'-monophosphate (UMP).</text>
</comment>
<comment type="catalytic activity">
    <reaction evidence="1">
        <text>orotidine 5'-phosphate + H(+) = UMP + CO2</text>
        <dbReference type="Rhea" id="RHEA:11596"/>
        <dbReference type="ChEBI" id="CHEBI:15378"/>
        <dbReference type="ChEBI" id="CHEBI:16526"/>
        <dbReference type="ChEBI" id="CHEBI:57538"/>
        <dbReference type="ChEBI" id="CHEBI:57865"/>
        <dbReference type="EC" id="4.1.1.23"/>
    </reaction>
</comment>
<comment type="pathway">
    <text evidence="1">Pyrimidine metabolism; UMP biosynthesis via de novo pathway; UMP from orotate: step 2/2.</text>
</comment>
<comment type="subunit">
    <text evidence="1">Homodimer.</text>
</comment>
<comment type="similarity">
    <text evidence="1">Belongs to the OMP decarboxylase family. Type 1 subfamily.</text>
</comment>
<proteinExistence type="inferred from homology"/>
<organism>
    <name type="scientific">Agrobacterium fabrum (strain C58 / ATCC 33970)</name>
    <name type="common">Agrobacterium tumefaciens (strain C58)</name>
    <dbReference type="NCBI Taxonomy" id="176299"/>
    <lineage>
        <taxon>Bacteria</taxon>
        <taxon>Pseudomonadati</taxon>
        <taxon>Pseudomonadota</taxon>
        <taxon>Alphaproteobacteria</taxon>
        <taxon>Hyphomicrobiales</taxon>
        <taxon>Rhizobiaceae</taxon>
        <taxon>Rhizobium/Agrobacterium group</taxon>
        <taxon>Agrobacterium</taxon>
        <taxon>Agrobacterium tumefaciens complex</taxon>
    </lineage>
</organism>
<protein>
    <recommendedName>
        <fullName evidence="1">Orotidine 5'-phosphate decarboxylase</fullName>
        <ecNumber evidence="1">4.1.1.23</ecNumber>
    </recommendedName>
    <alternativeName>
        <fullName evidence="1">OMP decarboxylase</fullName>
        <shortName evidence="1">OMPDCase</shortName>
        <shortName evidence="1">OMPdecase</shortName>
    </alternativeName>
</protein>
<accession>P58638</accession>
<reference key="1">
    <citation type="journal article" date="2001" name="Science">
        <title>The genome of the natural genetic engineer Agrobacterium tumefaciens C58.</title>
        <authorList>
            <person name="Wood D.W."/>
            <person name="Setubal J.C."/>
            <person name="Kaul R."/>
            <person name="Monks D.E."/>
            <person name="Kitajima J.P."/>
            <person name="Okura V.K."/>
            <person name="Zhou Y."/>
            <person name="Chen L."/>
            <person name="Wood G.E."/>
            <person name="Almeida N.F. Jr."/>
            <person name="Woo L."/>
            <person name="Chen Y."/>
            <person name="Paulsen I.T."/>
            <person name="Eisen J.A."/>
            <person name="Karp P.D."/>
            <person name="Bovee D. Sr."/>
            <person name="Chapman P."/>
            <person name="Clendenning J."/>
            <person name="Deatherage G."/>
            <person name="Gillet W."/>
            <person name="Grant C."/>
            <person name="Kutyavin T."/>
            <person name="Levy R."/>
            <person name="Li M.-J."/>
            <person name="McClelland E."/>
            <person name="Palmieri A."/>
            <person name="Raymond C."/>
            <person name="Rouse G."/>
            <person name="Saenphimmachak C."/>
            <person name="Wu Z."/>
            <person name="Romero P."/>
            <person name="Gordon D."/>
            <person name="Zhang S."/>
            <person name="Yoo H."/>
            <person name="Tao Y."/>
            <person name="Biddle P."/>
            <person name="Jung M."/>
            <person name="Krespan W."/>
            <person name="Perry M."/>
            <person name="Gordon-Kamm B."/>
            <person name="Liao L."/>
            <person name="Kim S."/>
            <person name="Hendrick C."/>
            <person name="Zhao Z.-Y."/>
            <person name="Dolan M."/>
            <person name="Chumley F."/>
            <person name="Tingey S.V."/>
            <person name="Tomb J.-F."/>
            <person name="Gordon M.P."/>
            <person name="Olson M.V."/>
            <person name="Nester E.W."/>
        </authorList>
    </citation>
    <scope>NUCLEOTIDE SEQUENCE [LARGE SCALE GENOMIC DNA]</scope>
    <source>
        <strain>C58 / ATCC 33970</strain>
    </source>
</reference>
<reference key="2">
    <citation type="journal article" date="2001" name="Science">
        <title>Genome sequence of the plant pathogen and biotechnology agent Agrobacterium tumefaciens C58.</title>
        <authorList>
            <person name="Goodner B."/>
            <person name="Hinkle G."/>
            <person name="Gattung S."/>
            <person name="Miller N."/>
            <person name="Blanchard M."/>
            <person name="Qurollo B."/>
            <person name="Goldman B.S."/>
            <person name="Cao Y."/>
            <person name="Askenazi M."/>
            <person name="Halling C."/>
            <person name="Mullin L."/>
            <person name="Houmiel K."/>
            <person name="Gordon J."/>
            <person name="Vaudin M."/>
            <person name="Iartchouk O."/>
            <person name="Epp A."/>
            <person name="Liu F."/>
            <person name="Wollam C."/>
            <person name="Allinger M."/>
            <person name="Doughty D."/>
            <person name="Scott C."/>
            <person name="Lappas C."/>
            <person name="Markelz B."/>
            <person name="Flanagan C."/>
            <person name="Crowell C."/>
            <person name="Gurson J."/>
            <person name="Lomo C."/>
            <person name="Sear C."/>
            <person name="Strub G."/>
            <person name="Cielo C."/>
            <person name="Slater S."/>
        </authorList>
    </citation>
    <scope>NUCLEOTIDE SEQUENCE [LARGE SCALE GENOMIC DNA]</scope>
    <source>
        <strain>C58 / ATCC 33970</strain>
    </source>
</reference>
<keyword id="KW-0210">Decarboxylase</keyword>
<keyword id="KW-0456">Lyase</keyword>
<keyword id="KW-0665">Pyrimidine biosynthesis</keyword>
<keyword id="KW-1185">Reference proteome</keyword>
<sequence>MTAREKLIVGLDVPTVQQAEDIVSKIGDEVLFYKIGYQLVFAGGLEFARDLVQSGKKVFLDMKLLDIDNTVASGVENIARMGMSMLTLHAYPKAMRAAVKAAEGSGLCLLGVTVLTSMDDSDLVEAGYASDARSLVLRRAEQAREAGMGGIVCSAEESTAVREILGPDLAVVTPGIRPAGADLGDQKRVMTPYDAIKAGSSHLVVARPIVRAEDPKAAARAILDDMLRASFPANQ</sequence>
<evidence type="ECO:0000255" key="1">
    <source>
        <dbReference type="HAMAP-Rule" id="MF_01200"/>
    </source>
</evidence>